<sequence>MLHLSDFSGSDALLSKPTEGCAHASPELPRLPARDAPSAAAYPGGDFLSWALSSCGAGGDLTDSCFLEGPAPTPPSGLSYSGSFFIQAVPEHPHDPEALFNLMSGILGLAPFPGPEAAASRSPLDVPFPAGPDALLPDLYSPDLSSAAFPEAFWEAAPSAGAPSQCLFEPQLSPPDVKPGLRAPPASPALDAAASAFKGPYAPWELLSAGVPGNCGSQGSFQTTPEARFSAVGTKVEDLLSISCPAELPGPAARLYQAGAYDTFSLAPGDLGEGTEGLPALLTPPGGEGGSGGEGGEFLAAPPAQLSPLGLRGAATADFSKPLVADLPGGSGVAAPSSPAASFPAAKARRKGRRGGKCSARCFCPRPHVKAFACPVESCVRSFARSDELNRHLRIHTGHKPFQCRICLRNFSRSDHLTTHVRTHTGEKPFACDVCGRRFARSDEKKRHSKVHLKQKARAEERLKGLGFYSLGLSFAAL</sequence>
<keyword id="KW-0238">DNA-binding</keyword>
<keyword id="KW-0479">Metal-binding</keyword>
<keyword id="KW-0539">Nucleus</keyword>
<keyword id="KW-1185">Reference proteome</keyword>
<keyword id="KW-0677">Repeat</keyword>
<keyword id="KW-0804">Transcription</keyword>
<keyword id="KW-0805">Transcription regulation</keyword>
<keyword id="KW-0862">Zinc</keyword>
<keyword id="KW-0863">Zinc-finger</keyword>
<reference key="1">
    <citation type="journal article" date="1999" name="Development">
        <title>Infertility associated with incomplete spermatogenic arrest and oligozoospermia in Egr4-deficient mice.</title>
        <authorList>
            <person name="Tourtellotte W.G."/>
            <person name="Nagarajan R."/>
            <person name="Auyeung A."/>
            <person name="Mueller C."/>
            <person name="Milbrandt J."/>
        </authorList>
    </citation>
    <scope>NUCLEOTIDE SEQUENCE [GENOMIC DNA]</scope>
</reference>
<comment type="function">
    <text evidence="1">Transcriptional regulator. Recognizes and binds to the DNA sequence 5'-GCGGGGGCG-3' (GSG). Activates the transcription of target genes whose products are required for mitogenesis and differentiation (By similarity).</text>
</comment>
<comment type="subcellular location">
    <subcellularLocation>
        <location>Nucleus</location>
    </subcellularLocation>
</comment>
<comment type="similarity">
    <text evidence="4">Belongs to the EGR C2H2-type zinc-finger protein family.</text>
</comment>
<proteinExistence type="inferred from homology"/>
<gene>
    <name type="primary">Egr4</name>
</gene>
<name>EGR4_MOUSE</name>
<protein>
    <recommendedName>
        <fullName>Early growth response protein 4</fullName>
        <shortName>EGR-4</shortName>
    </recommendedName>
</protein>
<dbReference type="EMBL" id="AF132613">
    <property type="protein sequence ID" value="AAD28267.1"/>
    <property type="molecule type" value="Genomic_DNA"/>
</dbReference>
<dbReference type="CCDS" id="CCDS20297.1"/>
<dbReference type="RefSeq" id="NP_065621.1">
    <property type="nucleotide sequence ID" value="NM_020596.3"/>
</dbReference>
<dbReference type="SMR" id="Q9WUF2"/>
<dbReference type="FunCoup" id="Q9WUF2">
    <property type="interactions" value="11"/>
</dbReference>
<dbReference type="STRING" id="10090.ENSMUSP00000093433"/>
<dbReference type="GlyGen" id="Q9WUF2">
    <property type="glycosylation" value="1 site"/>
</dbReference>
<dbReference type="iPTMnet" id="Q9WUF2"/>
<dbReference type="PhosphoSitePlus" id="Q9WUF2"/>
<dbReference type="PaxDb" id="10090-ENSMUSP00000093433"/>
<dbReference type="ProteomicsDB" id="277734"/>
<dbReference type="Antibodypedia" id="16536">
    <property type="antibodies" value="112 antibodies from 26 providers"/>
</dbReference>
<dbReference type="DNASU" id="13656"/>
<dbReference type="Ensembl" id="ENSMUST00000095759.5">
    <property type="protein sequence ID" value="ENSMUSP00000093433.4"/>
    <property type="gene ID" value="ENSMUSG00000071341.5"/>
</dbReference>
<dbReference type="GeneID" id="13656"/>
<dbReference type="KEGG" id="mmu:13656"/>
<dbReference type="UCSC" id="uc009cpy.1">
    <property type="organism name" value="mouse"/>
</dbReference>
<dbReference type="AGR" id="MGI:99252"/>
<dbReference type="CTD" id="1961"/>
<dbReference type="MGI" id="MGI:99252">
    <property type="gene designation" value="Egr4"/>
</dbReference>
<dbReference type="VEuPathDB" id="HostDB:ENSMUSG00000071341"/>
<dbReference type="eggNOG" id="KOG1721">
    <property type="taxonomic scope" value="Eukaryota"/>
</dbReference>
<dbReference type="GeneTree" id="ENSGT00940000162199"/>
<dbReference type="HOGENOM" id="CLU_044356_0_0_1"/>
<dbReference type="InParanoid" id="Q9WUF2"/>
<dbReference type="OMA" id="LYKWGGC"/>
<dbReference type="OrthoDB" id="8197458at2759"/>
<dbReference type="PhylomeDB" id="Q9WUF2"/>
<dbReference type="TreeFam" id="TF318980"/>
<dbReference type="BioGRID-ORCS" id="13656">
    <property type="hits" value="2 hits in 78 CRISPR screens"/>
</dbReference>
<dbReference type="PRO" id="PR:Q9WUF2"/>
<dbReference type="Proteomes" id="UP000000589">
    <property type="component" value="Chromosome 6"/>
</dbReference>
<dbReference type="RNAct" id="Q9WUF2">
    <property type="molecule type" value="protein"/>
</dbReference>
<dbReference type="Bgee" id="ENSMUSG00000071341">
    <property type="expression patterns" value="Expressed in superior frontal gyrus and 33 other cell types or tissues"/>
</dbReference>
<dbReference type="ExpressionAtlas" id="Q9WUF2">
    <property type="expression patterns" value="baseline and differential"/>
</dbReference>
<dbReference type="GO" id="GO:0005634">
    <property type="term" value="C:nucleus"/>
    <property type="evidence" value="ECO:0007669"/>
    <property type="project" value="UniProtKB-SubCell"/>
</dbReference>
<dbReference type="GO" id="GO:0003677">
    <property type="term" value="F:DNA binding"/>
    <property type="evidence" value="ECO:0007669"/>
    <property type="project" value="UniProtKB-KW"/>
</dbReference>
<dbReference type="GO" id="GO:0008270">
    <property type="term" value="F:zinc ion binding"/>
    <property type="evidence" value="ECO:0007669"/>
    <property type="project" value="UniProtKB-KW"/>
</dbReference>
<dbReference type="FunFam" id="3.30.160.60:FF:000324">
    <property type="entry name" value="Early growth response protein 4"/>
    <property type="match status" value="1"/>
</dbReference>
<dbReference type="FunFam" id="3.30.160.60:FF:000419">
    <property type="entry name" value="Early growth response protein 4"/>
    <property type="match status" value="1"/>
</dbReference>
<dbReference type="FunFam" id="3.30.160.60:FF:001289">
    <property type="entry name" value="Zinc finger protein 574"/>
    <property type="match status" value="1"/>
</dbReference>
<dbReference type="Gene3D" id="3.30.160.60">
    <property type="entry name" value="Classic Zinc Finger"/>
    <property type="match status" value="3"/>
</dbReference>
<dbReference type="InterPro" id="IPR036236">
    <property type="entry name" value="Znf_C2H2_sf"/>
</dbReference>
<dbReference type="InterPro" id="IPR013087">
    <property type="entry name" value="Znf_C2H2_type"/>
</dbReference>
<dbReference type="PANTHER" id="PTHR23235:SF58">
    <property type="entry name" value="EARLY GROWTH RESPONSE PROTEIN 4"/>
    <property type="match status" value="1"/>
</dbReference>
<dbReference type="PANTHER" id="PTHR23235">
    <property type="entry name" value="KRUEPPEL-LIKE TRANSCRIPTION FACTOR"/>
    <property type="match status" value="1"/>
</dbReference>
<dbReference type="Pfam" id="PF00096">
    <property type="entry name" value="zf-C2H2"/>
    <property type="match status" value="3"/>
</dbReference>
<dbReference type="SMART" id="SM00355">
    <property type="entry name" value="ZnF_C2H2"/>
    <property type="match status" value="3"/>
</dbReference>
<dbReference type="SUPFAM" id="SSF57667">
    <property type="entry name" value="beta-beta-alpha zinc fingers"/>
    <property type="match status" value="2"/>
</dbReference>
<dbReference type="PROSITE" id="PS00028">
    <property type="entry name" value="ZINC_FINGER_C2H2_1"/>
    <property type="match status" value="3"/>
</dbReference>
<dbReference type="PROSITE" id="PS50157">
    <property type="entry name" value="ZINC_FINGER_C2H2_2"/>
    <property type="match status" value="3"/>
</dbReference>
<evidence type="ECO:0000250" key="1"/>
<evidence type="ECO:0000255" key="2">
    <source>
        <dbReference type="PROSITE-ProRule" id="PRU00042"/>
    </source>
</evidence>
<evidence type="ECO:0000256" key="3">
    <source>
        <dbReference type="SAM" id="MobiDB-lite"/>
    </source>
</evidence>
<evidence type="ECO:0000305" key="4"/>
<organism>
    <name type="scientific">Mus musculus</name>
    <name type="common">Mouse</name>
    <dbReference type="NCBI Taxonomy" id="10090"/>
    <lineage>
        <taxon>Eukaryota</taxon>
        <taxon>Metazoa</taxon>
        <taxon>Chordata</taxon>
        <taxon>Craniata</taxon>
        <taxon>Vertebrata</taxon>
        <taxon>Euteleostomi</taxon>
        <taxon>Mammalia</taxon>
        <taxon>Eutheria</taxon>
        <taxon>Euarchontoglires</taxon>
        <taxon>Glires</taxon>
        <taxon>Rodentia</taxon>
        <taxon>Myomorpha</taxon>
        <taxon>Muroidea</taxon>
        <taxon>Muridae</taxon>
        <taxon>Murinae</taxon>
        <taxon>Mus</taxon>
        <taxon>Mus</taxon>
    </lineage>
</organism>
<accession>Q9WUF2</accession>
<feature type="chain" id="PRO_0000047129" description="Early growth response protein 4">
    <location>
        <begin position="1"/>
        <end position="478"/>
    </location>
</feature>
<feature type="zinc finger region" description="C2H2-type 1" evidence="2">
    <location>
        <begin position="372"/>
        <end position="396"/>
    </location>
</feature>
<feature type="zinc finger region" description="C2H2-type 2" evidence="2">
    <location>
        <begin position="402"/>
        <end position="424"/>
    </location>
</feature>
<feature type="zinc finger region" description="C2H2-type 3" evidence="2">
    <location>
        <begin position="430"/>
        <end position="452"/>
    </location>
</feature>
<feature type="region of interest" description="Disordered" evidence="3">
    <location>
        <begin position="275"/>
        <end position="302"/>
    </location>
</feature>
<feature type="compositionally biased region" description="Gly residues" evidence="3">
    <location>
        <begin position="286"/>
        <end position="296"/>
    </location>
</feature>